<feature type="chain" id="PRO_1000049342" description="Small ribosomal subunit protein bS16">
    <location>
        <begin position="1"/>
        <end position="83"/>
    </location>
</feature>
<evidence type="ECO:0000255" key="1">
    <source>
        <dbReference type="HAMAP-Rule" id="MF_00385"/>
    </source>
</evidence>
<evidence type="ECO:0000305" key="2"/>
<proteinExistence type="inferred from homology"/>
<sequence length="83" mass="9299">MVTIRLARGGAKKRPFYNIVVTDSRNARDGRFIERVGFFNPLAKGQEETLRLDLDRVDHWVGNGASTTDRVAKLIKDARKAAA</sequence>
<organism>
    <name type="scientific">Shewanella amazonensis (strain ATCC BAA-1098 / SB2B)</name>
    <dbReference type="NCBI Taxonomy" id="326297"/>
    <lineage>
        <taxon>Bacteria</taxon>
        <taxon>Pseudomonadati</taxon>
        <taxon>Pseudomonadota</taxon>
        <taxon>Gammaproteobacteria</taxon>
        <taxon>Alteromonadales</taxon>
        <taxon>Shewanellaceae</taxon>
        <taxon>Shewanella</taxon>
    </lineage>
</organism>
<name>RS16_SHEAM</name>
<dbReference type="EMBL" id="CP000507">
    <property type="protein sequence ID" value="ABL99096.1"/>
    <property type="molecule type" value="Genomic_DNA"/>
</dbReference>
<dbReference type="RefSeq" id="WP_011759006.1">
    <property type="nucleotide sequence ID" value="NC_008700.1"/>
</dbReference>
<dbReference type="SMR" id="A1S3Z0"/>
<dbReference type="STRING" id="326297.Sama_0889"/>
<dbReference type="KEGG" id="saz:Sama_0889"/>
<dbReference type="eggNOG" id="COG0228">
    <property type="taxonomic scope" value="Bacteria"/>
</dbReference>
<dbReference type="HOGENOM" id="CLU_100590_5_1_6"/>
<dbReference type="OrthoDB" id="9807878at2"/>
<dbReference type="Proteomes" id="UP000009175">
    <property type="component" value="Chromosome"/>
</dbReference>
<dbReference type="GO" id="GO:0005737">
    <property type="term" value="C:cytoplasm"/>
    <property type="evidence" value="ECO:0007669"/>
    <property type="project" value="UniProtKB-ARBA"/>
</dbReference>
<dbReference type="GO" id="GO:0015935">
    <property type="term" value="C:small ribosomal subunit"/>
    <property type="evidence" value="ECO:0007669"/>
    <property type="project" value="TreeGrafter"/>
</dbReference>
<dbReference type="GO" id="GO:0003735">
    <property type="term" value="F:structural constituent of ribosome"/>
    <property type="evidence" value="ECO:0007669"/>
    <property type="project" value="InterPro"/>
</dbReference>
<dbReference type="GO" id="GO:0006412">
    <property type="term" value="P:translation"/>
    <property type="evidence" value="ECO:0007669"/>
    <property type="project" value="UniProtKB-UniRule"/>
</dbReference>
<dbReference type="FunFam" id="3.30.1320.10:FF:000001">
    <property type="entry name" value="30S ribosomal protein S16"/>
    <property type="match status" value="1"/>
</dbReference>
<dbReference type="Gene3D" id="3.30.1320.10">
    <property type="match status" value="1"/>
</dbReference>
<dbReference type="HAMAP" id="MF_00385">
    <property type="entry name" value="Ribosomal_bS16"/>
    <property type="match status" value="1"/>
</dbReference>
<dbReference type="InterPro" id="IPR000307">
    <property type="entry name" value="Ribosomal_bS16"/>
</dbReference>
<dbReference type="InterPro" id="IPR020592">
    <property type="entry name" value="Ribosomal_bS16_CS"/>
</dbReference>
<dbReference type="InterPro" id="IPR023803">
    <property type="entry name" value="Ribosomal_bS16_dom_sf"/>
</dbReference>
<dbReference type="NCBIfam" id="TIGR00002">
    <property type="entry name" value="S16"/>
    <property type="match status" value="1"/>
</dbReference>
<dbReference type="PANTHER" id="PTHR12919">
    <property type="entry name" value="30S RIBOSOMAL PROTEIN S16"/>
    <property type="match status" value="1"/>
</dbReference>
<dbReference type="PANTHER" id="PTHR12919:SF20">
    <property type="entry name" value="SMALL RIBOSOMAL SUBUNIT PROTEIN BS16M"/>
    <property type="match status" value="1"/>
</dbReference>
<dbReference type="Pfam" id="PF00886">
    <property type="entry name" value="Ribosomal_S16"/>
    <property type="match status" value="1"/>
</dbReference>
<dbReference type="SUPFAM" id="SSF54565">
    <property type="entry name" value="Ribosomal protein S16"/>
    <property type="match status" value="1"/>
</dbReference>
<dbReference type="PROSITE" id="PS00732">
    <property type="entry name" value="RIBOSOMAL_S16"/>
    <property type="match status" value="1"/>
</dbReference>
<gene>
    <name evidence="1" type="primary">rpsP</name>
    <name type="ordered locus">Sama_0889</name>
</gene>
<protein>
    <recommendedName>
        <fullName evidence="1">Small ribosomal subunit protein bS16</fullName>
    </recommendedName>
    <alternativeName>
        <fullName evidence="2">30S ribosomal protein S16</fullName>
    </alternativeName>
</protein>
<comment type="similarity">
    <text evidence="1">Belongs to the bacterial ribosomal protein bS16 family.</text>
</comment>
<reference key="1">
    <citation type="submission" date="2006-12" db="EMBL/GenBank/DDBJ databases">
        <title>Complete sequence of Shewanella amazonensis SB2B.</title>
        <authorList>
            <consortium name="US DOE Joint Genome Institute"/>
            <person name="Copeland A."/>
            <person name="Lucas S."/>
            <person name="Lapidus A."/>
            <person name="Barry K."/>
            <person name="Detter J.C."/>
            <person name="Glavina del Rio T."/>
            <person name="Hammon N."/>
            <person name="Israni S."/>
            <person name="Dalin E."/>
            <person name="Tice H."/>
            <person name="Pitluck S."/>
            <person name="Munk A.C."/>
            <person name="Brettin T."/>
            <person name="Bruce D."/>
            <person name="Han C."/>
            <person name="Tapia R."/>
            <person name="Gilna P."/>
            <person name="Schmutz J."/>
            <person name="Larimer F."/>
            <person name="Land M."/>
            <person name="Hauser L."/>
            <person name="Kyrpides N."/>
            <person name="Mikhailova N."/>
            <person name="Fredrickson J."/>
            <person name="Richardson P."/>
        </authorList>
    </citation>
    <scope>NUCLEOTIDE SEQUENCE [LARGE SCALE GENOMIC DNA]</scope>
    <source>
        <strain>ATCC BAA-1098 / SB2B</strain>
    </source>
</reference>
<accession>A1S3Z0</accession>
<keyword id="KW-1185">Reference proteome</keyword>
<keyword id="KW-0687">Ribonucleoprotein</keyword>
<keyword id="KW-0689">Ribosomal protein</keyword>